<comment type="function">
    <text evidence="2">Catalyzes the NAD-dependent oxidation and subsequent decarboxylation of D-threonate 4-phosphate to produce dihydroxyacetone phosphate (DHAP).</text>
</comment>
<comment type="catalytic activity">
    <reaction evidence="2">
        <text>4-O-phospho-D-threonate + NAD(+) = dihydroxyacetone phosphate + CO2 + NADH</text>
        <dbReference type="Rhea" id="RHEA:52396"/>
        <dbReference type="ChEBI" id="CHEBI:16526"/>
        <dbReference type="ChEBI" id="CHEBI:57540"/>
        <dbReference type="ChEBI" id="CHEBI:57642"/>
        <dbReference type="ChEBI" id="CHEBI:57945"/>
        <dbReference type="ChEBI" id="CHEBI:136590"/>
        <dbReference type="EC" id="1.1.1.408"/>
    </reaction>
</comment>
<comment type="cofactor">
    <cofactor evidence="1">
        <name>a divalent metal cation</name>
        <dbReference type="ChEBI" id="CHEBI:60240"/>
    </cofactor>
    <text evidence="1">Binds 1 divalent metal cation per subunit.</text>
</comment>
<comment type="subunit">
    <text evidence="2">Homodimer.</text>
</comment>
<comment type="similarity">
    <text evidence="3">Belongs to the PdxA family. PdxA2 subfamily.</text>
</comment>
<keyword id="KW-0119">Carbohydrate metabolism</keyword>
<keyword id="KW-0479">Metal-binding</keyword>
<keyword id="KW-0520">NAD</keyword>
<keyword id="KW-0560">Oxidoreductase</keyword>
<name>PDXA2_CUTAK</name>
<feature type="chain" id="PRO_1000211915" description="Putative D-threonate 4-phosphate dehydrogenase">
    <location>
        <begin position="1"/>
        <end position="346"/>
    </location>
</feature>
<feature type="binding site" evidence="1">
    <location>
        <position position="141"/>
    </location>
    <ligand>
        <name>substrate</name>
    </ligand>
</feature>
<feature type="binding site" evidence="1">
    <location>
        <position position="142"/>
    </location>
    <ligand>
        <name>substrate</name>
    </ligand>
</feature>
<feature type="binding site" evidence="1">
    <location>
        <position position="171"/>
    </location>
    <ligand>
        <name>a divalent metal cation</name>
        <dbReference type="ChEBI" id="CHEBI:60240"/>
        <note>ligand shared between dimeric partners</note>
    </ligand>
</feature>
<feature type="binding site" evidence="1">
    <location>
        <position position="215"/>
    </location>
    <ligand>
        <name>a divalent metal cation</name>
        <dbReference type="ChEBI" id="CHEBI:60240"/>
        <note>ligand shared between dimeric partners</note>
    </ligand>
</feature>
<feature type="binding site" evidence="1">
    <location>
        <position position="270"/>
    </location>
    <ligand>
        <name>a divalent metal cation</name>
        <dbReference type="ChEBI" id="CHEBI:60240"/>
        <note>ligand shared between dimeric partners</note>
    </ligand>
</feature>
<feature type="binding site" evidence="1">
    <location>
        <position position="278"/>
    </location>
    <ligand>
        <name>substrate</name>
    </ligand>
</feature>
<feature type="binding site" evidence="1">
    <location>
        <position position="296"/>
    </location>
    <ligand>
        <name>substrate</name>
    </ligand>
</feature>
<gene>
    <name type="ordered locus">PPA0296</name>
</gene>
<organism>
    <name type="scientific">Cutibacterium acnes (strain DSM 16379 / KPA171202)</name>
    <name type="common">Propionibacterium acnes</name>
    <dbReference type="NCBI Taxonomy" id="267747"/>
    <lineage>
        <taxon>Bacteria</taxon>
        <taxon>Bacillati</taxon>
        <taxon>Actinomycetota</taxon>
        <taxon>Actinomycetes</taxon>
        <taxon>Propionibacteriales</taxon>
        <taxon>Propionibacteriaceae</taxon>
        <taxon>Cutibacterium</taxon>
    </lineage>
</organism>
<reference key="1">
    <citation type="journal article" date="2004" name="Science">
        <title>The complete genome sequence of Propionibacterium acnes, a commensal of human skin.</title>
        <authorList>
            <person name="Brueggemann H."/>
            <person name="Henne A."/>
            <person name="Hoster F."/>
            <person name="Liesegang H."/>
            <person name="Wiezer A."/>
            <person name="Strittmatter A."/>
            <person name="Hujer S."/>
            <person name="Duerre P."/>
            <person name="Gottschalk G."/>
        </authorList>
    </citation>
    <scope>NUCLEOTIDE SEQUENCE [LARGE SCALE GENOMIC DNA]</scope>
    <source>
        <strain>DSM 16379 / KPA171202</strain>
    </source>
</reference>
<dbReference type="EC" id="1.1.1.408" evidence="2"/>
<dbReference type="EMBL" id="AE017283">
    <property type="protein sequence ID" value="AAT82054.1"/>
    <property type="molecule type" value="Genomic_DNA"/>
</dbReference>
<dbReference type="SMR" id="Q6AB12"/>
<dbReference type="EnsemblBacteria" id="AAT82054">
    <property type="protein sequence ID" value="AAT82054"/>
    <property type="gene ID" value="PPA0296"/>
</dbReference>
<dbReference type="KEGG" id="pac:PPA0296"/>
<dbReference type="PATRIC" id="fig|267747.3.peg.308"/>
<dbReference type="eggNOG" id="COG1995">
    <property type="taxonomic scope" value="Bacteria"/>
</dbReference>
<dbReference type="HOGENOM" id="CLU_040168_0_1_11"/>
<dbReference type="Proteomes" id="UP000000603">
    <property type="component" value="Chromosome"/>
</dbReference>
<dbReference type="GO" id="GO:0046872">
    <property type="term" value="F:metal ion binding"/>
    <property type="evidence" value="ECO:0007669"/>
    <property type="project" value="UniProtKB-KW"/>
</dbReference>
<dbReference type="GO" id="GO:0051287">
    <property type="term" value="F:NAD binding"/>
    <property type="evidence" value="ECO:0007669"/>
    <property type="project" value="InterPro"/>
</dbReference>
<dbReference type="GO" id="GO:0016491">
    <property type="term" value="F:oxidoreductase activity"/>
    <property type="evidence" value="ECO:0007669"/>
    <property type="project" value="UniProtKB-KW"/>
</dbReference>
<dbReference type="Gene3D" id="3.40.718.10">
    <property type="entry name" value="Isopropylmalate Dehydrogenase"/>
    <property type="match status" value="1"/>
</dbReference>
<dbReference type="InterPro" id="IPR005255">
    <property type="entry name" value="PdxA_fam"/>
</dbReference>
<dbReference type="NCBIfam" id="TIGR00557">
    <property type="entry name" value="pdxA"/>
    <property type="match status" value="1"/>
</dbReference>
<dbReference type="PANTHER" id="PTHR30004">
    <property type="entry name" value="4-HYDROXYTHREONINE-4-PHOSPHATE DEHYDROGENASE"/>
    <property type="match status" value="1"/>
</dbReference>
<dbReference type="PANTHER" id="PTHR30004:SF6">
    <property type="entry name" value="D-THREONATE 4-PHOSPHATE DEHYDROGENASE"/>
    <property type="match status" value="1"/>
</dbReference>
<dbReference type="Pfam" id="PF04166">
    <property type="entry name" value="PdxA"/>
    <property type="match status" value="1"/>
</dbReference>
<dbReference type="SUPFAM" id="SSF53659">
    <property type="entry name" value="Isocitrate/Isopropylmalate dehydrogenase-like"/>
    <property type="match status" value="1"/>
</dbReference>
<sequence length="346" mass="36659">MPKTPLLGITEGDPAGIGPEITVQAIHNMADDRSFIPIVYGDPAIISRACSVTGLSETVRRVTSEEHIEPESNVINVVDTGTVPHADSIEWGSVQELAGRAAIASIEAATDAALSGKTDGVVTSPINKEAIWKTGSEFLGHTEMLGSLCGTPDTDTMFVVSGLKIFFATRHMSLREAVDSIRRDLIDHEIHKALRALKVFGCNSPKLAVAALNPHAGEGGHFGTEEIEVLRPAVKSACAEGHNVVGPVPADSVFHKGVIREYDGVLSLYHDQGHIASKTLDFDGTVSVTAGLPILRTSVDHGTAFDIAGQGAASPMTMQSALHVASDFARFVPVIREEYLPSTGRN</sequence>
<evidence type="ECO:0000250" key="1">
    <source>
        <dbReference type="UniProtKB" id="P19624"/>
    </source>
</evidence>
<evidence type="ECO:0000250" key="2">
    <source>
        <dbReference type="UniProtKB" id="P58718"/>
    </source>
</evidence>
<evidence type="ECO:0000305" key="3"/>
<protein>
    <recommendedName>
        <fullName evidence="2">Putative D-threonate 4-phosphate dehydrogenase</fullName>
        <ecNumber evidence="2">1.1.1.408</ecNumber>
    </recommendedName>
</protein>
<proteinExistence type="inferred from homology"/>
<accession>Q6AB12</accession>